<accession>B7JJB0</accession>
<dbReference type="EC" id="2.1.1.74" evidence="1"/>
<dbReference type="EMBL" id="CP001283">
    <property type="protein sequence ID" value="ACK91927.1"/>
    <property type="molecule type" value="Genomic_DNA"/>
</dbReference>
<dbReference type="RefSeq" id="WP_001991958.1">
    <property type="nucleotide sequence ID" value="NC_011773.1"/>
</dbReference>
<dbReference type="SMR" id="B7JJB0"/>
<dbReference type="KEGG" id="bcu:BCAH820_3844"/>
<dbReference type="HOGENOM" id="CLU_033057_1_0_9"/>
<dbReference type="Proteomes" id="UP000001363">
    <property type="component" value="Chromosome"/>
</dbReference>
<dbReference type="GO" id="GO:0005829">
    <property type="term" value="C:cytosol"/>
    <property type="evidence" value="ECO:0007669"/>
    <property type="project" value="TreeGrafter"/>
</dbReference>
<dbReference type="GO" id="GO:0050660">
    <property type="term" value="F:flavin adenine dinucleotide binding"/>
    <property type="evidence" value="ECO:0007669"/>
    <property type="project" value="UniProtKB-UniRule"/>
</dbReference>
<dbReference type="GO" id="GO:0047151">
    <property type="term" value="F:tRNA (uracil(54)-C5)-methyltransferase activity, 5,10-methylenetetrahydrofolate-dependent"/>
    <property type="evidence" value="ECO:0007669"/>
    <property type="project" value="UniProtKB-UniRule"/>
</dbReference>
<dbReference type="GO" id="GO:0030488">
    <property type="term" value="P:tRNA methylation"/>
    <property type="evidence" value="ECO:0007669"/>
    <property type="project" value="TreeGrafter"/>
</dbReference>
<dbReference type="GO" id="GO:0002098">
    <property type="term" value="P:tRNA wobble uridine modification"/>
    <property type="evidence" value="ECO:0007669"/>
    <property type="project" value="TreeGrafter"/>
</dbReference>
<dbReference type="FunFam" id="3.50.50.60:FF:000035">
    <property type="entry name" value="Methylenetetrahydrofolate--tRNA-(uracil-5-)-methyltransferase TrmFO"/>
    <property type="match status" value="1"/>
</dbReference>
<dbReference type="FunFam" id="3.50.50.60:FF:000040">
    <property type="entry name" value="Methylenetetrahydrofolate--tRNA-(uracil-5-)-methyltransferase TrmFO"/>
    <property type="match status" value="1"/>
</dbReference>
<dbReference type="Gene3D" id="3.50.50.60">
    <property type="entry name" value="FAD/NAD(P)-binding domain"/>
    <property type="match status" value="2"/>
</dbReference>
<dbReference type="HAMAP" id="MF_01037">
    <property type="entry name" value="TrmFO"/>
    <property type="match status" value="1"/>
</dbReference>
<dbReference type="InterPro" id="IPR036188">
    <property type="entry name" value="FAD/NAD-bd_sf"/>
</dbReference>
<dbReference type="InterPro" id="IPR002218">
    <property type="entry name" value="MnmG-rel"/>
</dbReference>
<dbReference type="InterPro" id="IPR020595">
    <property type="entry name" value="MnmG-rel_CS"/>
</dbReference>
<dbReference type="InterPro" id="IPR040131">
    <property type="entry name" value="MnmG_N"/>
</dbReference>
<dbReference type="InterPro" id="IPR004417">
    <property type="entry name" value="TrmFO"/>
</dbReference>
<dbReference type="NCBIfam" id="TIGR00137">
    <property type="entry name" value="gid_trmFO"/>
    <property type="match status" value="1"/>
</dbReference>
<dbReference type="NCBIfam" id="NF003739">
    <property type="entry name" value="PRK05335.1"/>
    <property type="match status" value="1"/>
</dbReference>
<dbReference type="PANTHER" id="PTHR11806">
    <property type="entry name" value="GLUCOSE INHIBITED DIVISION PROTEIN A"/>
    <property type="match status" value="1"/>
</dbReference>
<dbReference type="PANTHER" id="PTHR11806:SF2">
    <property type="entry name" value="METHYLENETETRAHYDROFOLATE--TRNA-(URACIL-5-)-METHYLTRANSFERASE TRMFO"/>
    <property type="match status" value="1"/>
</dbReference>
<dbReference type="Pfam" id="PF01134">
    <property type="entry name" value="GIDA"/>
    <property type="match status" value="1"/>
</dbReference>
<dbReference type="SUPFAM" id="SSF51905">
    <property type="entry name" value="FAD/NAD(P)-binding domain"/>
    <property type="match status" value="1"/>
</dbReference>
<dbReference type="PROSITE" id="PS01281">
    <property type="entry name" value="GIDA_2"/>
    <property type="match status" value="1"/>
</dbReference>
<keyword id="KW-0963">Cytoplasm</keyword>
<keyword id="KW-0274">FAD</keyword>
<keyword id="KW-0285">Flavoprotein</keyword>
<keyword id="KW-0489">Methyltransferase</keyword>
<keyword id="KW-0520">NAD</keyword>
<keyword id="KW-0521">NADP</keyword>
<keyword id="KW-0808">Transferase</keyword>
<keyword id="KW-0819">tRNA processing</keyword>
<comment type="function">
    <text evidence="1">Catalyzes the folate-dependent formation of 5-methyl-uridine at position 54 (M-5-U54) in all tRNAs.</text>
</comment>
<comment type="catalytic activity">
    <reaction evidence="1">
        <text>uridine(54) in tRNA + (6R)-5,10-methylene-5,6,7,8-tetrahydrofolate + NADH + H(+) = 5-methyluridine(54) in tRNA + (6S)-5,6,7,8-tetrahydrofolate + NAD(+)</text>
        <dbReference type="Rhea" id="RHEA:16873"/>
        <dbReference type="Rhea" id="RHEA-COMP:10167"/>
        <dbReference type="Rhea" id="RHEA-COMP:10193"/>
        <dbReference type="ChEBI" id="CHEBI:15378"/>
        <dbReference type="ChEBI" id="CHEBI:15636"/>
        <dbReference type="ChEBI" id="CHEBI:57453"/>
        <dbReference type="ChEBI" id="CHEBI:57540"/>
        <dbReference type="ChEBI" id="CHEBI:57945"/>
        <dbReference type="ChEBI" id="CHEBI:65315"/>
        <dbReference type="ChEBI" id="CHEBI:74447"/>
        <dbReference type="EC" id="2.1.1.74"/>
    </reaction>
</comment>
<comment type="catalytic activity">
    <reaction evidence="1">
        <text>uridine(54) in tRNA + (6R)-5,10-methylene-5,6,7,8-tetrahydrofolate + NADPH + H(+) = 5-methyluridine(54) in tRNA + (6S)-5,6,7,8-tetrahydrofolate + NADP(+)</text>
        <dbReference type="Rhea" id="RHEA:62372"/>
        <dbReference type="Rhea" id="RHEA-COMP:10167"/>
        <dbReference type="Rhea" id="RHEA-COMP:10193"/>
        <dbReference type="ChEBI" id="CHEBI:15378"/>
        <dbReference type="ChEBI" id="CHEBI:15636"/>
        <dbReference type="ChEBI" id="CHEBI:57453"/>
        <dbReference type="ChEBI" id="CHEBI:57783"/>
        <dbReference type="ChEBI" id="CHEBI:58349"/>
        <dbReference type="ChEBI" id="CHEBI:65315"/>
        <dbReference type="ChEBI" id="CHEBI:74447"/>
        <dbReference type="EC" id="2.1.1.74"/>
    </reaction>
</comment>
<comment type="cofactor">
    <cofactor evidence="1">
        <name>FAD</name>
        <dbReference type="ChEBI" id="CHEBI:57692"/>
    </cofactor>
</comment>
<comment type="subcellular location">
    <subcellularLocation>
        <location evidence="1">Cytoplasm</location>
    </subcellularLocation>
</comment>
<comment type="similarity">
    <text evidence="1">Belongs to the MnmG family. TrmFO subfamily.</text>
</comment>
<reference key="1">
    <citation type="submission" date="2008-10" db="EMBL/GenBank/DDBJ databases">
        <title>Genome sequence of Bacillus cereus AH820.</title>
        <authorList>
            <person name="Dodson R.J."/>
            <person name="Durkin A.S."/>
            <person name="Rosovitz M.J."/>
            <person name="Rasko D.A."/>
            <person name="Hoffmaster A."/>
            <person name="Ravel J."/>
            <person name="Sutton G."/>
        </authorList>
    </citation>
    <scope>NUCLEOTIDE SEQUENCE [LARGE SCALE GENOMIC DNA]</scope>
    <source>
        <strain>AH820</strain>
    </source>
</reference>
<protein>
    <recommendedName>
        <fullName evidence="1">Methylenetetrahydrofolate--tRNA-(uracil-5-)-methyltransferase TrmFO</fullName>
        <ecNumber evidence="1">2.1.1.74</ecNumber>
    </recommendedName>
    <alternativeName>
        <fullName evidence="1">Folate-dependent tRNA (uracil-5-)-methyltransferase</fullName>
    </alternativeName>
    <alternativeName>
        <fullName evidence="1">Folate-dependent tRNA(M-5-U54)-methyltransferase</fullName>
    </alternativeName>
</protein>
<name>TRMFO_BACC0</name>
<organism>
    <name type="scientific">Bacillus cereus (strain AH820)</name>
    <dbReference type="NCBI Taxonomy" id="405535"/>
    <lineage>
        <taxon>Bacteria</taxon>
        <taxon>Bacillati</taxon>
        <taxon>Bacillota</taxon>
        <taxon>Bacilli</taxon>
        <taxon>Bacillales</taxon>
        <taxon>Bacillaceae</taxon>
        <taxon>Bacillus</taxon>
        <taxon>Bacillus cereus group</taxon>
    </lineage>
</organism>
<gene>
    <name evidence="1" type="primary">trmFO</name>
    <name type="ordered locus">BCAH820_3844</name>
</gene>
<sequence>MTTQVVNVIGAGLAGSEAAYQIAKRGVQVRLYEMRPVRQTPAHHTDKFAELVCSNSLRANTLTNAVGVIKEEMRLMDSVIIRAADECSVPAGGALAVDRHEFAAKVTEYVKNHPNVTVMNEEITEIPEGPTIIATGPLTSPDLSAQLKELTGEDYFYFYDAAAPIVEKDSIDMNKVYLKSRYDKGEAAYLNCPMTEEEFDRFYEALIAAETVPLKEFEKEIFFEGCMPVEVMASRGRQTLVFGPMKPVGLEDPKTGKTPYAVVQLRQDDAAGTLYNIVGFQTHLKWGPQKEVLQLIPGLENAEIVRYGVMHRNTFINSPNLLRPTYQYKQRDDLFFAGQMTGVEGYVESAASGLLAGINAARLVKGEEPVVLPPVTAMGSMANYITATNAKNFQPMNANFGLFAPLEKKIKKKAERNEAYATRALETIRNFVNI</sequence>
<evidence type="ECO:0000255" key="1">
    <source>
        <dbReference type="HAMAP-Rule" id="MF_01037"/>
    </source>
</evidence>
<feature type="chain" id="PRO_1000135886" description="Methylenetetrahydrofolate--tRNA-(uracil-5-)-methyltransferase TrmFO">
    <location>
        <begin position="1"/>
        <end position="434"/>
    </location>
</feature>
<feature type="binding site" evidence="1">
    <location>
        <begin position="10"/>
        <end position="15"/>
    </location>
    <ligand>
        <name>FAD</name>
        <dbReference type="ChEBI" id="CHEBI:57692"/>
    </ligand>
</feature>
<proteinExistence type="inferred from homology"/>